<proteinExistence type="inferred from homology"/>
<comment type="function">
    <text evidence="1">Catalyzes the condensation of ATP and 5-phosphoribose 1-diphosphate to form N'-(5'-phosphoribosyl)-ATP (PR-ATP). Has a crucial role in the pathway because the rate of histidine biosynthesis seems to be controlled primarily by regulation of HisG enzymatic activity.</text>
</comment>
<comment type="catalytic activity">
    <reaction evidence="1">
        <text>1-(5-phospho-beta-D-ribosyl)-ATP + diphosphate = 5-phospho-alpha-D-ribose 1-diphosphate + ATP</text>
        <dbReference type="Rhea" id="RHEA:18473"/>
        <dbReference type="ChEBI" id="CHEBI:30616"/>
        <dbReference type="ChEBI" id="CHEBI:33019"/>
        <dbReference type="ChEBI" id="CHEBI:58017"/>
        <dbReference type="ChEBI" id="CHEBI:73183"/>
        <dbReference type="EC" id="2.4.2.17"/>
    </reaction>
</comment>
<comment type="pathway">
    <text evidence="1">Amino-acid biosynthesis; L-histidine biosynthesis; L-histidine from 5-phospho-alpha-D-ribose 1-diphosphate: step 1/9.</text>
</comment>
<comment type="subunit">
    <text evidence="1">Heteromultimer composed of HisG and HisZ subunits.</text>
</comment>
<comment type="subcellular location">
    <subcellularLocation>
        <location evidence="1">Cytoplasm</location>
    </subcellularLocation>
</comment>
<comment type="domain">
    <text>Lacks the C-terminal regulatory region which is replaced by HisZ.</text>
</comment>
<comment type="similarity">
    <text evidence="1">Belongs to the ATP phosphoribosyltransferase family. Short subfamily.</text>
</comment>
<keyword id="KW-0028">Amino-acid biosynthesis</keyword>
<keyword id="KW-0067">ATP-binding</keyword>
<keyword id="KW-0963">Cytoplasm</keyword>
<keyword id="KW-0328">Glycosyltransferase</keyword>
<keyword id="KW-0368">Histidine biosynthesis</keyword>
<keyword id="KW-0547">Nucleotide-binding</keyword>
<keyword id="KW-0808">Transferase</keyword>
<name>HIS1_BURP0</name>
<reference key="1">
    <citation type="journal article" date="2010" name="Genome Biol. Evol.">
        <title>Continuing evolution of Burkholderia mallei through genome reduction and large-scale rearrangements.</title>
        <authorList>
            <person name="Losada L."/>
            <person name="Ronning C.M."/>
            <person name="DeShazer D."/>
            <person name="Woods D."/>
            <person name="Fedorova N."/>
            <person name="Kim H.S."/>
            <person name="Shabalina S.A."/>
            <person name="Pearson T.R."/>
            <person name="Brinkac L."/>
            <person name="Tan P."/>
            <person name="Nandi T."/>
            <person name="Crabtree J."/>
            <person name="Badger J."/>
            <person name="Beckstrom-Sternberg S."/>
            <person name="Saqib M."/>
            <person name="Schutzer S.E."/>
            <person name="Keim P."/>
            <person name="Nierman W.C."/>
        </authorList>
    </citation>
    <scope>NUCLEOTIDE SEQUENCE [LARGE SCALE GENOMIC DNA]</scope>
    <source>
        <strain>1106a</strain>
    </source>
</reference>
<protein>
    <recommendedName>
        <fullName evidence="1">ATP phosphoribosyltransferase</fullName>
        <shortName evidence="1">ATP-PRT</shortName>
        <shortName evidence="1">ATP-PRTase</shortName>
        <ecNumber evidence="1">2.4.2.17</ecNumber>
    </recommendedName>
</protein>
<accession>A3P034</accession>
<dbReference type="EC" id="2.4.2.17" evidence="1"/>
<dbReference type="EMBL" id="CP000572">
    <property type="protein sequence ID" value="ABN90535.1"/>
    <property type="molecule type" value="Genomic_DNA"/>
</dbReference>
<dbReference type="RefSeq" id="WP_004199915.1">
    <property type="nucleotide sequence ID" value="NC_009076.1"/>
</dbReference>
<dbReference type="SMR" id="A3P034"/>
<dbReference type="GeneID" id="93061757"/>
<dbReference type="KEGG" id="bpl:BURPS1106A_3725"/>
<dbReference type="HOGENOM" id="CLU_038115_2_0_4"/>
<dbReference type="UniPathway" id="UPA00031">
    <property type="reaction ID" value="UER00006"/>
</dbReference>
<dbReference type="Proteomes" id="UP000006738">
    <property type="component" value="Chromosome I"/>
</dbReference>
<dbReference type="GO" id="GO:0005737">
    <property type="term" value="C:cytoplasm"/>
    <property type="evidence" value="ECO:0007669"/>
    <property type="project" value="UniProtKB-SubCell"/>
</dbReference>
<dbReference type="GO" id="GO:0005524">
    <property type="term" value="F:ATP binding"/>
    <property type="evidence" value="ECO:0007669"/>
    <property type="project" value="UniProtKB-KW"/>
</dbReference>
<dbReference type="GO" id="GO:0003879">
    <property type="term" value="F:ATP phosphoribosyltransferase activity"/>
    <property type="evidence" value="ECO:0007669"/>
    <property type="project" value="UniProtKB-UniRule"/>
</dbReference>
<dbReference type="GO" id="GO:0000105">
    <property type="term" value="P:L-histidine biosynthetic process"/>
    <property type="evidence" value="ECO:0007669"/>
    <property type="project" value="UniProtKB-UniRule"/>
</dbReference>
<dbReference type="CDD" id="cd13595">
    <property type="entry name" value="PBP2_HisGs"/>
    <property type="match status" value="1"/>
</dbReference>
<dbReference type="FunFam" id="3.40.190.10:FF:000011">
    <property type="entry name" value="ATP phosphoribosyltransferase"/>
    <property type="match status" value="1"/>
</dbReference>
<dbReference type="Gene3D" id="3.40.190.10">
    <property type="entry name" value="Periplasmic binding protein-like II"/>
    <property type="match status" value="2"/>
</dbReference>
<dbReference type="HAMAP" id="MF_01018">
    <property type="entry name" value="HisG_Short"/>
    <property type="match status" value="1"/>
</dbReference>
<dbReference type="InterPro" id="IPR013820">
    <property type="entry name" value="ATP_PRibTrfase_cat"/>
</dbReference>
<dbReference type="InterPro" id="IPR018198">
    <property type="entry name" value="ATP_PRibTrfase_CS"/>
</dbReference>
<dbReference type="InterPro" id="IPR001348">
    <property type="entry name" value="ATP_PRibTrfase_HisG"/>
</dbReference>
<dbReference type="InterPro" id="IPR024893">
    <property type="entry name" value="ATP_PRibTrfase_HisG_short"/>
</dbReference>
<dbReference type="NCBIfam" id="TIGR00070">
    <property type="entry name" value="hisG"/>
    <property type="match status" value="1"/>
</dbReference>
<dbReference type="PANTHER" id="PTHR21403:SF8">
    <property type="entry name" value="ATP PHOSPHORIBOSYLTRANSFERASE"/>
    <property type="match status" value="1"/>
</dbReference>
<dbReference type="PANTHER" id="PTHR21403">
    <property type="entry name" value="ATP PHOSPHORIBOSYLTRANSFERASE ATP-PRTASE"/>
    <property type="match status" value="1"/>
</dbReference>
<dbReference type="Pfam" id="PF01634">
    <property type="entry name" value="HisG"/>
    <property type="match status" value="1"/>
</dbReference>
<dbReference type="SUPFAM" id="SSF53850">
    <property type="entry name" value="Periplasmic binding protein-like II"/>
    <property type="match status" value="1"/>
</dbReference>
<dbReference type="PROSITE" id="PS01316">
    <property type="entry name" value="ATP_P_PHORIBOSYLTR"/>
    <property type="match status" value="1"/>
</dbReference>
<sequence length="218" mass="23067">MSAPLTLALSKGRIFEETVPLLAAAGVTVAEDPETSRKLILPTTDPNLRVIVVRATDVPTYVEYGAADFGVAGKDVLLEHGGGGLYQPIDLNIARCRMSVAVPAGFDYANAVRQGARLRVATKYVETAREHFAAKGVHVDLIKLYGSMELAPLVGLADAIVDLVSSGGTLKANNLVEVEEIMPISSRLVVNQAALKLKRAALKPFLDAFERASLGSGA</sequence>
<evidence type="ECO:0000255" key="1">
    <source>
        <dbReference type="HAMAP-Rule" id="MF_01018"/>
    </source>
</evidence>
<gene>
    <name evidence="1" type="primary">hisG</name>
    <name type="ordered locus">BURPS1106A_3725</name>
</gene>
<feature type="chain" id="PRO_1000063273" description="ATP phosphoribosyltransferase">
    <location>
        <begin position="1"/>
        <end position="218"/>
    </location>
</feature>
<organism>
    <name type="scientific">Burkholderia pseudomallei (strain 1106a)</name>
    <dbReference type="NCBI Taxonomy" id="357348"/>
    <lineage>
        <taxon>Bacteria</taxon>
        <taxon>Pseudomonadati</taxon>
        <taxon>Pseudomonadota</taxon>
        <taxon>Betaproteobacteria</taxon>
        <taxon>Burkholderiales</taxon>
        <taxon>Burkholderiaceae</taxon>
        <taxon>Burkholderia</taxon>
        <taxon>pseudomallei group</taxon>
    </lineage>
</organism>